<reference key="1">
    <citation type="journal article" date="2002" name="Proc. Natl. Acad. Sci. U.S.A.">
        <title>Extensive mosaic structure revealed by the complete genome sequence of uropathogenic Escherichia coli.</title>
        <authorList>
            <person name="Welch R.A."/>
            <person name="Burland V."/>
            <person name="Plunkett G. III"/>
            <person name="Redford P."/>
            <person name="Roesch P."/>
            <person name="Rasko D."/>
            <person name="Buckles E.L."/>
            <person name="Liou S.-R."/>
            <person name="Boutin A."/>
            <person name="Hackett J."/>
            <person name="Stroud D."/>
            <person name="Mayhew G.F."/>
            <person name="Rose D.J."/>
            <person name="Zhou S."/>
            <person name="Schwartz D.C."/>
            <person name="Perna N.T."/>
            <person name="Mobley H.L.T."/>
            <person name="Donnenberg M.S."/>
            <person name="Blattner F.R."/>
        </authorList>
    </citation>
    <scope>NUCLEOTIDE SEQUENCE [LARGE SCALE GENOMIC DNA]</scope>
    <source>
        <strain>CFT073 / ATCC 700928 / UPEC</strain>
    </source>
</reference>
<evidence type="ECO:0000255" key="1">
    <source>
        <dbReference type="HAMAP-Rule" id="MF_01708"/>
    </source>
</evidence>
<sequence length="233" mass="25452">MNKILLQCDNLCKRYQEGSVQTDVLHNVSFSVGEGEMMAIVGSSGSGKSTLLHLLGGLDTPTSGDVIFNGQPMSKLSSAAKAELRNQKLGFIYQFHHLLPDFTALENVAMPLLIGKKKPAEINSRALEMLKAVGLEHRANHRPSELSGGERQRVAIARALVNNPRLVLADEPTGNLDARNADSIFQLLGELNRLQGTAFLVVTHDLQLAKRMSRQLEMRDGRLTAELSLMGAE</sequence>
<comment type="function">
    <text evidence="1">Part of the ABC transporter complex LolCDE involved in the translocation of mature outer membrane-directed lipoproteins, from the inner membrane to the periplasmic chaperone, LolA. Responsible for the formation of the LolA-lipoprotein complex in an ATP-dependent manner.</text>
</comment>
<comment type="subunit">
    <text evidence="1">The complex is composed of two ATP-binding proteins (LolD) and two transmembrane proteins (LolC and LolE).</text>
</comment>
<comment type="subcellular location">
    <subcellularLocation>
        <location evidence="1">Cell inner membrane</location>
        <topology evidence="1">Peripheral membrane protein</topology>
    </subcellularLocation>
</comment>
<comment type="similarity">
    <text evidence="1">Belongs to the ABC transporter superfamily. Lipoprotein translocase (TC 3.A.1.125) family.</text>
</comment>
<feature type="chain" id="PRO_0000092436" description="Lipoprotein-releasing system ATP-binding protein LolD">
    <location>
        <begin position="1"/>
        <end position="233"/>
    </location>
</feature>
<feature type="domain" description="ABC transporter" evidence="1">
    <location>
        <begin position="6"/>
        <end position="233"/>
    </location>
</feature>
<feature type="binding site" evidence="1">
    <location>
        <begin position="42"/>
        <end position="49"/>
    </location>
    <ligand>
        <name>ATP</name>
        <dbReference type="ChEBI" id="CHEBI:30616"/>
    </ligand>
</feature>
<dbReference type="EC" id="7.6.2.-" evidence="1"/>
<dbReference type="EMBL" id="AE014075">
    <property type="protein sequence ID" value="AAN79861.1"/>
    <property type="molecule type" value="Genomic_DNA"/>
</dbReference>
<dbReference type="RefSeq" id="WP_001033695.1">
    <property type="nucleotide sequence ID" value="NZ_CP051263.1"/>
</dbReference>
<dbReference type="SMR" id="Q8FIM7"/>
<dbReference type="STRING" id="199310.c1392"/>
<dbReference type="GeneID" id="93776291"/>
<dbReference type="KEGG" id="ecc:c1392"/>
<dbReference type="eggNOG" id="COG1136">
    <property type="taxonomic scope" value="Bacteria"/>
</dbReference>
<dbReference type="HOGENOM" id="CLU_000604_1_22_6"/>
<dbReference type="BioCyc" id="ECOL199310:C1392-MONOMER"/>
<dbReference type="Proteomes" id="UP000001410">
    <property type="component" value="Chromosome"/>
</dbReference>
<dbReference type="GO" id="GO:0005886">
    <property type="term" value="C:plasma membrane"/>
    <property type="evidence" value="ECO:0007669"/>
    <property type="project" value="UniProtKB-SubCell"/>
</dbReference>
<dbReference type="GO" id="GO:0005524">
    <property type="term" value="F:ATP binding"/>
    <property type="evidence" value="ECO:0007669"/>
    <property type="project" value="UniProtKB-KW"/>
</dbReference>
<dbReference type="GO" id="GO:0016887">
    <property type="term" value="F:ATP hydrolysis activity"/>
    <property type="evidence" value="ECO:0007669"/>
    <property type="project" value="InterPro"/>
</dbReference>
<dbReference type="GO" id="GO:0022857">
    <property type="term" value="F:transmembrane transporter activity"/>
    <property type="evidence" value="ECO:0007669"/>
    <property type="project" value="TreeGrafter"/>
</dbReference>
<dbReference type="GO" id="GO:0044874">
    <property type="term" value="P:lipoprotein localization to outer membrane"/>
    <property type="evidence" value="ECO:0007669"/>
    <property type="project" value="TreeGrafter"/>
</dbReference>
<dbReference type="GO" id="GO:0089705">
    <property type="term" value="P:protein localization to outer membrane"/>
    <property type="evidence" value="ECO:0007669"/>
    <property type="project" value="TreeGrafter"/>
</dbReference>
<dbReference type="CDD" id="cd03255">
    <property type="entry name" value="ABC_MJ0796_LolCDE_FtsE"/>
    <property type="match status" value="1"/>
</dbReference>
<dbReference type="FunFam" id="3.40.50.300:FF:000230">
    <property type="entry name" value="Lipoprotein-releasing system ATP-binding protein LolD"/>
    <property type="match status" value="1"/>
</dbReference>
<dbReference type="Gene3D" id="3.40.50.300">
    <property type="entry name" value="P-loop containing nucleotide triphosphate hydrolases"/>
    <property type="match status" value="1"/>
</dbReference>
<dbReference type="InterPro" id="IPR003593">
    <property type="entry name" value="AAA+_ATPase"/>
</dbReference>
<dbReference type="InterPro" id="IPR003439">
    <property type="entry name" value="ABC_transporter-like_ATP-bd"/>
</dbReference>
<dbReference type="InterPro" id="IPR017871">
    <property type="entry name" value="ABC_transporter-like_CS"/>
</dbReference>
<dbReference type="InterPro" id="IPR015854">
    <property type="entry name" value="ABC_transpr_LolD-like"/>
</dbReference>
<dbReference type="InterPro" id="IPR011924">
    <property type="entry name" value="LolD_lipo_ATP-bd"/>
</dbReference>
<dbReference type="InterPro" id="IPR017911">
    <property type="entry name" value="MacB-like_ATP-bd"/>
</dbReference>
<dbReference type="InterPro" id="IPR027417">
    <property type="entry name" value="P-loop_NTPase"/>
</dbReference>
<dbReference type="NCBIfam" id="TIGR02211">
    <property type="entry name" value="LolD_lipo_ex"/>
    <property type="match status" value="1"/>
</dbReference>
<dbReference type="NCBIfam" id="NF008639">
    <property type="entry name" value="PRK11629.1"/>
    <property type="match status" value="1"/>
</dbReference>
<dbReference type="PANTHER" id="PTHR24220">
    <property type="entry name" value="IMPORT ATP-BINDING PROTEIN"/>
    <property type="match status" value="1"/>
</dbReference>
<dbReference type="PANTHER" id="PTHR24220:SF689">
    <property type="entry name" value="LIPOPROTEIN-RELEASING SYSTEM ATP-BINDING PROTEIN LOLD"/>
    <property type="match status" value="1"/>
</dbReference>
<dbReference type="Pfam" id="PF00005">
    <property type="entry name" value="ABC_tran"/>
    <property type="match status" value="1"/>
</dbReference>
<dbReference type="SMART" id="SM00382">
    <property type="entry name" value="AAA"/>
    <property type="match status" value="1"/>
</dbReference>
<dbReference type="SUPFAM" id="SSF52540">
    <property type="entry name" value="P-loop containing nucleoside triphosphate hydrolases"/>
    <property type="match status" value="1"/>
</dbReference>
<dbReference type="PROSITE" id="PS00211">
    <property type="entry name" value="ABC_TRANSPORTER_1"/>
    <property type="match status" value="1"/>
</dbReference>
<dbReference type="PROSITE" id="PS50893">
    <property type="entry name" value="ABC_TRANSPORTER_2"/>
    <property type="match status" value="1"/>
</dbReference>
<dbReference type="PROSITE" id="PS51244">
    <property type="entry name" value="LOLD"/>
    <property type="match status" value="1"/>
</dbReference>
<keyword id="KW-0067">ATP-binding</keyword>
<keyword id="KW-0997">Cell inner membrane</keyword>
<keyword id="KW-1003">Cell membrane</keyword>
<keyword id="KW-0472">Membrane</keyword>
<keyword id="KW-0547">Nucleotide-binding</keyword>
<keyword id="KW-1185">Reference proteome</keyword>
<keyword id="KW-1278">Translocase</keyword>
<keyword id="KW-0813">Transport</keyword>
<organism>
    <name type="scientific">Escherichia coli O6:H1 (strain CFT073 / ATCC 700928 / UPEC)</name>
    <dbReference type="NCBI Taxonomy" id="199310"/>
    <lineage>
        <taxon>Bacteria</taxon>
        <taxon>Pseudomonadati</taxon>
        <taxon>Pseudomonadota</taxon>
        <taxon>Gammaproteobacteria</taxon>
        <taxon>Enterobacterales</taxon>
        <taxon>Enterobacteriaceae</taxon>
        <taxon>Escherichia</taxon>
    </lineage>
</organism>
<accession>Q8FIM7</accession>
<name>LOLD_ECOL6</name>
<gene>
    <name evidence="1" type="primary">lolD</name>
    <name type="ordered locus">c1392</name>
</gene>
<proteinExistence type="inferred from homology"/>
<protein>
    <recommendedName>
        <fullName evidence="1">Lipoprotein-releasing system ATP-binding protein LolD</fullName>
        <ecNumber evidence="1">7.6.2.-</ecNumber>
    </recommendedName>
</protein>